<dbReference type="EC" id="2.3.2.27"/>
<dbReference type="EMBL" id="AY616583">
    <property type="protein sequence ID" value="AAT37634.1"/>
    <property type="molecule type" value="mRNA"/>
</dbReference>
<dbReference type="EMBL" id="AL929208">
    <property type="protein sequence ID" value="CAK11108.1"/>
    <property type="molecule type" value="Genomic_DNA"/>
</dbReference>
<dbReference type="EMBL" id="BC055214">
    <property type="protein sequence ID" value="AAH55214.1"/>
    <property type="molecule type" value="mRNA"/>
</dbReference>
<dbReference type="EMBL" id="BC171483">
    <property type="protein sequence ID" value="AAI71483.1"/>
    <property type="molecule type" value="mRNA"/>
</dbReference>
<dbReference type="EMBL" id="BC171487">
    <property type="protein sequence ID" value="AAI71487.1"/>
    <property type="molecule type" value="mRNA"/>
</dbReference>
<dbReference type="RefSeq" id="NP_001038217.1">
    <property type="nucleotide sequence ID" value="NM_001044752.1"/>
</dbReference>
<dbReference type="RefSeq" id="XP_068078401.1">
    <property type="nucleotide sequence ID" value="XM_068222300.1"/>
</dbReference>
<dbReference type="PDB" id="5VNZ">
    <property type="method" value="X-ray"/>
    <property type="resolution" value="3.41 A"/>
    <property type="chains" value="A/D=50-159"/>
</dbReference>
<dbReference type="PDB" id="5VO0">
    <property type="method" value="X-ray"/>
    <property type="resolution" value="3.90 A"/>
    <property type="chains" value="A/D=50-213"/>
</dbReference>
<dbReference type="PDB" id="6MYD">
    <property type="method" value="X-ray"/>
    <property type="resolution" value="1.40 A"/>
    <property type="chains" value="A/C=370-525"/>
</dbReference>
<dbReference type="PDBsum" id="5VNZ"/>
<dbReference type="PDBsum" id="5VO0"/>
<dbReference type="PDBsum" id="6MYD"/>
<dbReference type="SMR" id="Q6IWL4"/>
<dbReference type="FunCoup" id="Q6IWL4">
    <property type="interactions" value="1447"/>
</dbReference>
<dbReference type="STRING" id="7955.ENSDARP00000036715"/>
<dbReference type="PaxDb" id="7955-ENSDARP00000036715"/>
<dbReference type="Ensembl" id="ENSDART00000038273">
    <property type="protein sequence ID" value="ENSDARP00000036715"/>
    <property type="gene ID" value="ENSDARG00000028058"/>
</dbReference>
<dbReference type="Ensembl" id="ENSDART00000180847">
    <property type="protein sequence ID" value="ENSDARP00000151579"/>
    <property type="gene ID" value="ENSDARG00000028058"/>
</dbReference>
<dbReference type="Ensembl" id="ENSDART00000191675">
    <property type="protein sequence ID" value="ENSDARP00000150477"/>
    <property type="gene ID" value="ENSDARG00000028058"/>
</dbReference>
<dbReference type="GeneID" id="554561"/>
<dbReference type="KEGG" id="dre:554561"/>
<dbReference type="AGR" id="ZFIN:ZDB-GENE-030131-5735"/>
<dbReference type="CTD" id="7189"/>
<dbReference type="ZFIN" id="ZDB-GENE-030131-5735">
    <property type="gene designation" value="traf6"/>
</dbReference>
<dbReference type="eggNOG" id="KOG0297">
    <property type="taxonomic scope" value="Eukaryota"/>
</dbReference>
<dbReference type="HOGENOM" id="CLU_021061_5_0_1"/>
<dbReference type="InParanoid" id="Q6IWL4"/>
<dbReference type="OMA" id="FMHLQAL"/>
<dbReference type="OrthoDB" id="6475149at2759"/>
<dbReference type="PhylomeDB" id="Q6IWL4"/>
<dbReference type="TreeFam" id="TF321154"/>
<dbReference type="Reactome" id="R-DRE-168638">
    <property type="pathway name" value="NOD1/2 Signaling Pathway"/>
</dbReference>
<dbReference type="Reactome" id="R-DRE-209543">
    <property type="pathway name" value="p75NTR recruits signalling complexes"/>
</dbReference>
<dbReference type="Reactome" id="R-DRE-5689880">
    <property type="pathway name" value="Ub-specific processing proteases"/>
</dbReference>
<dbReference type="Reactome" id="R-DRE-5689896">
    <property type="pathway name" value="Ovarian tumor domain proteases"/>
</dbReference>
<dbReference type="Reactome" id="R-DRE-9020702">
    <property type="pathway name" value="Interleukin-1 signaling"/>
</dbReference>
<dbReference type="UniPathway" id="UPA00143"/>
<dbReference type="PRO" id="PR:Q6IWL4"/>
<dbReference type="Proteomes" id="UP000000437">
    <property type="component" value="Chromosome 7"/>
</dbReference>
<dbReference type="Bgee" id="ENSDARG00000028058">
    <property type="expression patterns" value="Expressed in pharyngeal gill and 23 other cell types or tissues"/>
</dbReference>
<dbReference type="GO" id="GO:0005938">
    <property type="term" value="C:cell cortex"/>
    <property type="evidence" value="ECO:0007669"/>
    <property type="project" value="UniProtKB-SubCell"/>
</dbReference>
<dbReference type="GO" id="GO:0005737">
    <property type="term" value="C:cytoplasm"/>
    <property type="evidence" value="ECO:0000318"/>
    <property type="project" value="GO_Central"/>
</dbReference>
<dbReference type="GO" id="GO:0009898">
    <property type="term" value="C:cytoplasmic side of plasma membrane"/>
    <property type="evidence" value="ECO:0000318"/>
    <property type="project" value="GO_Central"/>
</dbReference>
<dbReference type="GO" id="GO:0098978">
    <property type="term" value="C:glutamatergic synapse"/>
    <property type="evidence" value="ECO:0000318"/>
    <property type="project" value="GO_Central"/>
</dbReference>
<dbReference type="GO" id="GO:0005811">
    <property type="term" value="C:lipid droplet"/>
    <property type="evidence" value="ECO:0007669"/>
    <property type="project" value="UniProtKB-SubCell"/>
</dbReference>
<dbReference type="GO" id="GO:0005634">
    <property type="term" value="C:nucleus"/>
    <property type="evidence" value="ECO:0007669"/>
    <property type="project" value="UniProtKB-SubCell"/>
</dbReference>
<dbReference type="GO" id="GO:0035591">
    <property type="term" value="F:signaling adaptor activity"/>
    <property type="evidence" value="ECO:0000318"/>
    <property type="project" value="GO_Central"/>
</dbReference>
<dbReference type="GO" id="GO:0005164">
    <property type="term" value="F:tumor necrosis factor receptor binding"/>
    <property type="evidence" value="ECO:0007669"/>
    <property type="project" value="InterPro"/>
</dbReference>
<dbReference type="GO" id="GO:0061630">
    <property type="term" value="F:ubiquitin protein ligase activity"/>
    <property type="evidence" value="ECO:0000318"/>
    <property type="project" value="GO_Central"/>
</dbReference>
<dbReference type="GO" id="GO:0004842">
    <property type="term" value="F:ubiquitin-protein transferase activity"/>
    <property type="evidence" value="ECO:0000250"/>
    <property type="project" value="UniProtKB"/>
</dbReference>
<dbReference type="GO" id="GO:0008270">
    <property type="term" value="F:zinc ion binding"/>
    <property type="evidence" value="ECO:0007669"/>
    <property type="project" value="UniProtKB-KW"/>
</dbReference>
<dbReference type="GO" id="GO:0045087">
    <property type="term" value="P:innate immune response"/>
    <property type="evidence" value="ECO:0000315"/>
    <property type="project" value="ZFIN"/>
</dbReference>
<dbReference type="GO" id="GO:0031663">
    <property type="term" value="P:lipopolysaccharide-mediated signaling pathway"/>
    <property type="evidence" value="ECO:0000318"/>
    <property type="project" value="GO_Central"/>
</dbReference>
<dbReference type="GO" id="GO:0038061">
    <property type="term" value="P:non-canonical NF-kappaB signal transduction"/>
    <property type="evidence" value="ECO:0000304"/>
    <property type="project" value="ZFIN"/>
</dbReference>
<dbReference type="GO" id="GO:0045893">
    <property type="term" value="P:positive regulation of DNA-templated transcription"/>
    <property type="evidence" value="ECO:0000314"/>
    <property type="project" value="ZFIN"/>
</dbReference>
<dbReference type="GO" id="GO:0070534">
    <property type="term" value="P:protein K63-linked ubiquitination"/>
    <property type="evidence" value="ECO:0000250"/>
    <property type="project" value="UniProtKB"/>
</dbReference>
<dbReference type="GO" id="GO:0042981">
    <property type="term" value="P:regulation of apoptotic process"/>
    <property type="evidence" value="ECO:0007669"/>
    <property type="project" value="InterPro"/>
</dbReference>
<dbReference type="GO" id="GO:0043122">
    <property type="term" value="P:regulation of canonical NF-kappaB signal transduction"/>
    <property type="evidence" value="ECO:0000318"/>
    <property type="project" value="GO_Central"/>
</dbReference>
<dbReference type="GO" id="GO:0009617">
    <property type="term" value="P:response to bacterium"/>
    <property type="evidence" value="ECO:0000314"/>
    <property type="project" value="ZFIN"/>
</dbReference>
<dbReference type="GO" id="GO:0009615">
    <property type="term" value="P:response to virus"/>
    <property type="evidence" value="ECO:0000314"/>
    <property type="project" value="ZFIN"/>
</dbReference>
<dbReference type="CDD" id="cd03776">
    <property type="entry name" value="MATH_TRAF6"/>
    <property type="match status" value="1"/>
</dbReference>
<dbReference type="CDD" id="cd16643">
    <property type="entry name" value="mRING-HC-C3HC3D_TRAF6"/>
    <property type="match status" value="1"/>
</dbReference>
<dbReference type="FunFam" id="2.60.210.10:FF:000010">
    <property type="entry name" value="TNF receptor-associated factor"/>
    <property type="match status" value="1"/>
</dbReference>
<dbReference type="FunFam" id="3.30.40.10:FF:000179">
    <property type="entry name" value="TNF receptor-associated factor"/>
    <property type="match status" value="1"/>
</dbReference>
<dbReference type="FunFam" id="3.30.40.10:FF:000211">
    <property type="entry name" value="TNF receptor-associated factor"/>
    <property type="match status" value="1"/>
</dbReference>
<dbReference type="FunFam" id="3.30.40.10:FF:001052">
    <property type="entry name" value="TNF receptor-associated factor 6"/>
    <property type="match status" value="1"/>
</dbReference>
<dbReference type="Gene3D" id="2.60.210.10">
    <property type="entry name" value="Apoptosis, Tumor Necrosis Factor Receptor Associated Protein 2, Chain A"/>
    <property type="match status" value="1"/>
</dbReference>
<dbReference type="Gene3D" id="3.30.40.10">
    <property type="entry name" value="Zinc/RING finger domain, C3HC4 (zinc finger)"/>
    <property type="match status" value="3"/>
</dbReference>
<dbReference type="InterPro" id="IPR002083">
    <property type="entry name" value="MATH/TRAF_dom"/>
</dbReference>
<dbReference type="InterPro" id="IPR012227">
    <property type="entry name" value="TNF_rcpt-assoc_TRAF_met"/>
</dbReference>
<dbReference type="InterPro" id="IPR008974">
    <property type="entry name" value="TRAF-like"/>
</dbReference>
<dbReference type="InterPro" id="IPR049342">
    <property type="entry name" value="TRAF1-6_MATH_dom"/>
</dbReference>
<dbReference type="InterPro" id="IPR037309">
    <property type="entry name" value="TRAF6_MATH"/>
</dbReference>
<dbReference type="InterPro" id="IPR027139">
    <property type="entry name" value="TRAF6_RING-HC"/>
</dbReference>
<dbReference type="InterPro" id="IPR018957">
    <property type="entry name" value="Znf_C3HC4_RING-type"/>
</dbReference>
<dbReference type="InterPro" id="IPR001841">
    <property type="entry name" value="Znf_RING"/>
</dbReference>
<dbReference type="InterPro" id="IPR013083">
    <property type="entry name" value="Znf_RING/FYVE/PHD"/>
</dbReference>
<dbReference type="InterPro" id="IPR017907">
    <property type="entry name" value="Znf_RING_CS"/>
</dbReference>
<dbReference type="InterPro" id="IPR001293">
    <property type="entry name" value="Znf_TRAF"/>
</dbReference>
<dbReference type="PANTHER" id="PTHR10131">
    <property type="entry name" value="TNF RECEPTOR ASSOCIATED FACTOR"/>
    <property type="match status" value="1"/>
</dbReference>
<dbReference type="PANTHER" id="PTHR10131:SF152">
    <property type="entry name" value="TNF RECEPTOR-ASSOCIATED FACTOR 6"/>
    <property type="match status" value="1"/>
</dbReference>
<dbReference type="Pfam" id="PF21355">
    <property type="entry name" value="TRAF-mep_MATH"/>
    <property type="match status" value="1"/>
</dbReference>
<dbReference type="Pfam" id="PF00097">
    <property type="entry name" value="zf-C3HC4"/>
    <property type="match status" value="1"/>
</dbReference>
<dbReference type="Pfam" id="PF02176">
    <property type="entry name" value="zf-TRAF"/>
    <property type="match status" value="2"/>
</dbReference>
<dbReference type="PIRSF" id="PIRSF015614">
    <property type="entry name" value="TRAF"/>
    <property type="match status" value="1"/>
</dbReference>
<dbReference type="SMART" id="SM00061">
    <property type="entry name" value="MATH"/>
    <property type="match status" value="1"/>
</dbReference>
<dbReference type="SMART" id="SM00184">
    <property type="entry name" value="RING"/>
    <property type="match status" value="1"/>
</dbReference>
<dbReference type="SUPFAM" id="SSF57850">
    <property type="entry name" value="RING/U-box"/>
    <property type="match status" value="1"/>
</dbReference>
<dbReference type="SUPFAM" id="SSF49599">
    <property type="entry name" value="TRAF domain-like"/>
    <property type="match status" value="3"/>
</dbReference>
<dbReference type="PROSITE" id="PS50144">
    <property type="entry name" value="MATH"/>
    <property type="match status" value="1"/>
</dbReference>
<dbReference type="PROSITE" id="PS00518">
    <property type="entry name" value="ZF_RING_1"/>
    <property type="match status" value="1"/>
</dbReference>
<dbReference type="PROSITE" id="PS50089">
    <property type="entry name" value="ZF_RING_2"/>
    <property type="match status" value="1"/>
</dbReference>
<dbReference type="PROSITE" id="PS50145">
    <property type="entry name" value="ZF_TRAF"/>
    <property type="match status" value="1"/>
</dbReference>
<reference key="1">
    <citation type="submission" date="2004-05" db="EMBL/GenBank/DDBJ databases">
        <authorList>
            <person name="Phelan P.E. III"/>
            <person name="Mellon M.T."/>
            <person name="Kim C.H."/>
        </authorList>
    </citation>
    <scope>NUCLEOTIDE SEQUENCE [MRNA]</scope>
</reference>
<reference key="2">
    <citation type="journal article" date="2013" name="Nature">
        <title>The zebrafish reference genome sequence and its relationship to the human genome.</title>
        <authorList>
            <person name="Howe K."/>
            <person name="Clark M.D."/>
            <person name="Torroja C.F."/>
            <person name="Torrance J."/>
            <person name="Berthelot C."/>
            <person name="Muffato M."/>
            <person name="Collins J.E."/>
            <person name="Humphray S."/>
            <person name="McLaren K."/>
            <person name="Matthews L."/>
            <person name="McLaren S."/>
            <person name="Sealy I."/>
            <person name="Caccamo M."/>
            <person name="Churcher C."/>
            <person name="Scott C."/>
            <person name="Barrett J.C."/>
            <person name="Koch R."/>
            <person name="Rauch G.J."/>
            <person name="White S."/>
            <person name="Chow W."/>
            <person name="Kilian B."/>
            <person name="Quintais L.T."/>
            <person name="Guerra-Assuncao J.A."/>
            <person name="Zhou Y."/>
            <person name="Gu Y."/>
            <person name="Yen J."/>
            <person name="Vogel J.H."/>
            <person name="Eyre T."/>
            <person name="Redmond S."/>
            <person name="Banerjee R."/>
            <person name="Chi J."/>
            <person name="Fu B."/>
            <person name="Langley E."/>
            <person name="Maguire S.F."/>
            <person name="Laird G.K."/>
            <person name="Lloyd D."/>
            <person name="Kenyon E."/>
            <person name="Donaldson S."/>
            <person name="Sehra H."/>
            <person name="Almeida-King J."/>
            <person name="Loveland J."/>
            <person name="Trevanion S."/>
            <person name="Jones M."/>
            <person name="Quail M."/>
            <person name="Willey D."/>
            <person name="Hunt A."/>
            <person name="Burton J."/>
            <person name="Sims S."/>
            <person name="McLay K."/>
            <person name="Plumb B."/>
            <person name="Davis J."/>
            <person name="Clee C."/>
            <person name="Oliver K."/>
            <person name="Clark R."/>
            <person name="Riddle C."/>
            <person name="Elliot D."/>
            <person name="Threadgold G."/>
            <person name="Harden G."/>
            <person name="Ware D."/>
            <person name="Begum S."/>
            <person name="Mortimore B."/>
            <person name="Kerry G."/>
            <person name="Heath P."/>
            <person name="Phillimore B."/>
            <person name="Tracey A."/>
            <person name="Corby N."/>
            <person name="Dunn M."/>
            <person name="Johnson C."/>
            <person name="Wood J."/>
            <person name="Clark S."/>
            <person name="Pelan S."/>
            <person name="Griffiths G."/>
            <person name="Smith M."/>
            <person name="Glithero R."/>
            <person name="Howden P."/>
            <person name="Barker N."/>
            <person name="Lloyd C."/>
            <person name="Stevens C."/>
            <person name="Harley J."/>
            <person name="Holt K."/>
            <person name="Panagiotidis G."/>
            <person name="Lovell J."/>
            <person name="Beasley H."/>
            <person name="Henderson C."/>
            <person name="Gordon D."/>
            <person name="Auger K."/>
            <person name="Wright D."/>
            <person name="Collins J."/>
            <person name="Raisen C."/>
            <person name="Dyer L."/>
            <person name="Leung K."/>
            <person name="Robertson L."/>
            <person name="Ambridge K."/>
            <person name="Leongamornlert D."/>
            <person name="McGuire S."/>
            <person name="Gilderthorp R."/>
            <person name="Griffiths C."/>
            <person name="Manthravadi D."/>
            <person name="Nichol S."/>
            <person name="Barker G."/>
            <person name="Whitehead S."/>
            <person name="Kay M."/>
            <person name="Brown J."/>
            <person name="Murnane C."/>
            <person name="Gray E."/>
            <person name="Humphries M."/>
            <person name="Sycamore N."/>
            <person name="Barker D."/>
            <person name="Saunders D."/>
            <person name="Wallis J."/>
            <person name="Babbage A."/>
            <person name="Hammond S."/>
            <person name="Mashreghi-Mohammadi M."/>
            <person name="Barr L."/>
            <person name="Martin S."/>
            <person name="Wray P."/>
            <person name="Ellington A."/>
            <person name="Matthews N."/>
            <person name="Ellwood M."/>
            <person name="Woodmansey R."/>
            <person name="Clark G."/>
            <person name="Cooper J."/>
            <person name="Tromans A."/>
            <person name="Grafham D."/>
            <person name="Skuce C."/>
            <person name="Pandian R."/>
            <person name="Andrews R."/>
            <person name="Harrison E."/>
            <person name="Kimberley A."/>
            <person name="Garnett J."/>
            <person name="Fosker N."/>
            <person name="Hall R."/>
            <person name="Garner P."/>
            <person name="Kelly D."/>
            <person name="Bird C."/>
            <person name="Palmer S."/>
            <person name="Gehring I."/>
            <person name="Berger A."/>
            <person name="Dooley C.M."/>
            <person name="Ersan-Urun Z."/>
            <person name="Eser C."/>
            <person name="Geiger H."/>
            <person name="Geisler M."/>
            <person name="Karotki L."/>
            <person name="Kirn A."/>
            <person name="Konantz J."/>
            <person name="Konantz M."/>
            <person name="Oberlander M."/>
            <person name="Rudolph-Geiger S."/>
            <person name="Teucke M."/>
            <person name="Lanz C."/>
            <person name="Raddatz G."/>
            <person name="Osoegawa K."/>
            <person name="Zhu B."/>
            <person name="Rapp A."/>
            <person name="Widaa S."/>
            <person name="Langford C."/>
            <person name="Yang F."/>
            <person name="Schuster S.C."/>
            <person name="Carter N.P."/>
            <person name="Harrow J."/>
            <person name="Ning Z."/>
            <person name="Herrero J."/>
            <person name="Searle S.M."/>
            <person name="Enright A."/>
            <person name="Geisler R."/>
            <person name="Plasterk R.H."/>
            <person name="Lee C."/>
            <person name="Westerfield M."/>
            <person name="de Jong P.J."/>
            <person name="Zon L.I."/>
            <person name="Postlethwait J.H."/>
            <person name="Nusslein-Volhard C."/>
            <person name="Hubbard T.J."/>
            <person name="Roest Crollius H."/>
            <person name="Rogers J."/>
            <person name="Stemple D.L."/>
        </authorList>
    </citation>
    <scope>NUCLEOTIDE SEQUENCE [LARGE SCALE GENOMIC DNA]</scope>
    <source>
        <strain>Tuebingen</strain>
    </source>
</reference>
<reference key="3">
    <citation type="submission" date="2008-11" db="EMBL/GenBank/DDBJ databases">
        <authorList>
            <consortium name="NIH - Zebrafish Gene Collection (ZGC) project"/>
        </authorList>
    </citation>
    <scope>NUCLEOTIDE SEQUENCE [LARGE SCALE MRNA]</scope>
    <source>
        <strain>AB</strain>
    </source>
</reference>
<protein>
    <recommendedName>
        <fullName>TNF receptor-associated factor 6</fullName>
        <ecNumber>2.3.2.27</ecNumber>
    </recommendedName>
    <alternativeName>
        <fullName>E3 ubiquitin-protein ligase TRAF6</fullName>
    </alternativeName>
    <alternativeName>
        <fullName evidence="9">RING-type E3 ubiquitin transferase TRAF6</fullName>
    </alternativeName>
</protein>
<accession>Q6IWL4</accession>
<accession>Q1MTB3</accession>
<accession>Q7SXX1</accession>
<comment type="function">
    <text evidence="3">E3 ubiquitin ligase that, together with UBE2N and UBE2V1, mediates the synthesis of 'Lys-63'-linked-polyubiquitin chains conjugated to proteins, such as IKBKG, IRAK1, AKT1 and AKT2. Also mediates ubiquitination of free/unanchored polyubiquitin chain that leads to MAP3K7 activation.</text>
</comment>
<comment type="catalytic activity">
    <reaction evidence="3">
        <text>S-ubiquitinyl-[E2 ubiquitin-conjugating enzyme]-L-cysteine + [acceptor protein]-L-lysine = [E2 ubiquitin-conjugating enzyme]-L-cysteine + N(6)-ubiquitinyl-[acceptor protein]-L-lysine.</text>
        <dbReference type="EC" id="2.3.2.27"/>
    </reaction>
</comment>
<comment type="pathway">
    <text evidence="3">Protein modification; protein ubiquitination.</text>
</comment>
<comment type="subunit">
    <text evidence="3">Homotrimer. Homooligomer.</text>
</comment>
<comment type="subcellular location">
    <subcellularLocation>
        <location evidence="3">Cytoplasm</location>
    </subcellularLocation>
    <subcellularLocation>
        <location evidence="3">Cytoplasm</location>
        <location evidence="3">Cell cortex</location>
    </subcellularLocation>
    <subcellularLocation>
        <location evidence="3">Nucleus</location>
    </subcellularLocation>
    <subcellularLocation>
        <location evidence="2">Lipid droplet</location>
    </subcellularLocation>
</comment>
<comment type="domain">
    <text evidence="1">The coiled coil domain mediates homo- and hetero-oligomerization.</text>
</comment>
<comment type="domain">
    <text evidence="1">The MATH/TRAF domain binds to receptor cytoplasmic domains.</text>
</comment>
<comment type="similarity">
    <text evidence="9">Belongs to the TNF receptor-associated factor family. A subfamily.</text>
</comment>
<keyword id="KW-0002">3D-structure</keyword>
<keyword id="KW-0175">Coiled coil</keyword>
<keyword id="KW-0963">Cytoplasm</keyword>
<keyword id="KW-0551">Lipid droplet</keyword>
<keyword id="KW-0479">Metal-binding</keyword>
<keyword id="KW-0539">Nucleus</keyword>
<keyword id="KW-1185">Reference proteome</keyword>
<keyword id="KW-0677">Repeat</keyword>
<keyword id="KW-0808">Transferase</keyword>
<keyword id="KW-0833">Ubl conjugation pathway</keyword>
<keyword id="KW-0862">Zinc</keyword>
<keyword id="KW-0863">Zinc-finger</keyword>
<evidence type="ECO:0000250" key="1"/>
<evidence type="ECO:0000250" key="2">
    <source>
        <dbReference type="UniProtKB" id="P70196"/>
    </source>
</evidence>
<evidence type="ECO:0000250" key="3">
    <source>
        <dbReference type="UniProtKB" id="Q9Y4K3"/>
    </source>
</evidence>
<evidence type="ECO:0000255" key="4"/>
<evidence type="ECO:0000255" key="5">
    <source>
        <dbReference type="PROSITE-ProRule" id="PRU00129"/>
    </source>
</evidence>
<evidence type="ECO:0000255" key="6">
    <source>
        <dbReference type="PROSITE-ProRule" id="PRU00175"/>
    </source>
</evidence>
<evidence type="ECO:0000255" key="7">
    <source>
        <dbReference type="PROSITE-ProRule" id="PRU00207"/>
    </source>
</evidence>
<evidence type="ECO:0000256" key="8">
    <source>
        <dbReference type="SAM" id="MobiDB-lite"/>
    </source>
</evidence>
<evidence type="ECO:0000305" key="9"/>
<evidence type="ECO:0007829" key="10">
    <source>
        <dbReference type="PDB" id="5VNZ"/>
    </source>
</evidence>
<evidence type="ECO:0007829" key="11">
    <source>
        <dbReference type="PDB" id="6MYD"/>
    </source>
</evidence>
<organism>
    <name type="scientific">Danio rerio</name>
    <name type="common">Zebrafish</name>
    <name type="synonym">Brachydanio rerio</name>
    <dbReference type="NCBI Taxonomy" id="7955"/>
    <lineage>
        <taxon>Eukaryota</taxon>
        <taxon>Metazoa</taxon>
        <taxon>Chordata</taxon>
        <taxon>Craniata</taxon>
        <taxon>Vertebrata</taxon>
        <taxon>Euteleostomi</taxon>
        <taxon>Actinopterygii</taxon>
        <taxon>Neopterygii</taxon>
        <taxon>Teleostei</taxon>
        <taxon>Ostariophysi</taxon>
        <taxon>Cypriniformes</taxon>
        <taxon>Danionidae</taxon>
        <taxon>Danioninae</taxon>
        <taxon>Danio</taxon>
    </lineage>
</organism>
<feature type="chain" id="PRO_0000391612" description="TNF receptor-associated factor 6">
    <location>
        <begin position="1"/>
        <end position="542"/>
    </location>
</feature>
<feature type="domain" description="MATH" evidence="5">
    <location>
        <begin position="374"/>
        <end position="520"/>
    </location>
</feature>
<feature type="zinc finger region" description="RING-type; degenerate" evidence="6">
    <location>
        <begin position="71"/>
        <end position="110"/>
    </location>
</feature>
<feature type="zinc finger region" description="TRAF-type 1" evidence="7">
    <location>
        <begin position="151"/>
        <end position="203"/>
    </location>
</feature>
<feature type="zinc finger region" description="TRAF-type 2" evidence="7">
    <location>
        <begin position="204"/>
        <end position="260"/>
    </location>
</feature>
<feature type="region of interest" description="Disordered" evidence="8">
    <location>
        <begin position="32"/>
        <end position="54"/>
    </location>
</feature>
<feature type="coiled-coil region" evidence="4">
    <location>
        <begin position="311"/>
        <end position="373"/>
    </location>
</feature>
<feature type="compositionally biased region" description="Polar residues" evidence="8">
    <location>
        <begin position="35"/>
        <end position="52"/>
    </location>
</feature>
<feature type="binding site" evidence="1">
    <location>
        <begin position="489"/>
        <end position="496"/>
    </location>
    <ligand>
        <name>substrate</name>
    </ligand>
</feature>
<feature type="sequence conflict" description="In Ref. 1; AAT37634." evidence="9" ref="1">
    <original>D</original>
    <variation>G</variation>
    <location>
        <position position="13"/>
    </location>
</feature>
<feature type="sequence conflict" description="In Ref. 1; AAT37634 and 3; AAH55214." evidence="9" ref="1 3">
    <original>P</original>
    <variation>T</variation>
    <location>
        <position position="52"/>
    </location>
</feature>
<feature type="sequence conflict" description="In Ref. 3; AAH55214." evidence="9" ref="3">
    <original>T</original>
    <variation>A</variation>
    <location>
        <position position="84"/>
    </location>
</feature>
<feature type="sequence conflict" description="In Ref. 1; AAT37634." evidence="9" ref="1">
    <original>I</original>
    <variation>M</variation>
    <location>
        <position position="172"/>
    </location>
</feature>
<feature type="sequence conflict" description="In Ref. 1; AAT37634." evidence="9" ref="1">
    <original>N</original>
    <variation>S</variation>
    <location>
        <position position="204"/>
    </location>
</feature>
<feature type="sequence conflict" description="In Ref. 1; AAT37634 and 3; AAH55214." evidence="9" ref="1 3">
    <original>L</original>
    <variation>S</variation>
    <location>
        <position position="295"/>
    </location>
</feature>
<feature type="strand" evidence="10">
    <location>
        <begin position="61"/>
        <end position="63"/>
    </location>
</feature>
<feature type="helix" evidence="10">
    <location>
        <begin position="67"/>
        <end position="69"/>
    </location>
</feature>
<feature type="turn" evidence="10">
    <location>
        <begin position="72"/>
        <end position="74"/>
    </location>
</feature>
<feature type="strand" evidence="10">
    <location>
        <begin position="75"/>
        <end position="77"/>
    </location>
</feature>
<feature type="helix" evidence="10">
    <location>
        <begin position="92"/>
        <end position="100"/>
    </location>
</feature>
<feature type="turn" evidence="10">
    <location>
        <begin position="107"/>
        <end position="109"/>
    </location>
</feature>
<feature type="strand" evidence="10">
    <location>
        <begin position="115"/>
        <end position="117"/>
    </location>
</feature>
<feature type="helix" evidence="10">
    <location>
        <begin position="122"/>
        <end position="129"/>
    </location>
</feature>
<feature type="strand" evidence="10">
    <location>
        <begin position="131"/>
        <end position="134"/>
    </location>
</feature>
<feature type="strand" evidence="10">
    <location>
        <begin position="143"/>
        <end position="145"/>
    </location>
</feature>
<feature type="helix" evidence="10">
    <location>
        <begin position="146"/>
        <end position="148"/>
    </location>
</feature>
<feature type="helix" evidence="10">
    <location>
        <begin position="149"/>
        <end position="155"/>
    </location>
</feature>
<feature type="helix" evidence="11">
    <location>
        <begin position="370"/>
        <end position="373"/>
    </location>
</feature>
<feature type="strand" evidence="11">
    <location>
        <begin position="376"/>
        <end position="381"/>
    </location>
</feature>
<feature type="helix" evidence="11">
    <location>
        <begin position="384"/>
        <end position="392"/>
    </location>
</feature>
<feature type="strand" evidence="11">
    <location>
        <begin position="397"/>
        <end position="400"/>
    </location>
</feature>
<feature type="strand" evidence="11">
    <location>
        <begin position="404"/>
        <end position="409"/>
    </location>
</feature>
<feature type="strand" evidence="11">
    <location>
        <begin position="412"/>
        <end position="419"/>
    </location>
</feature>
<feature type="turn" evidence="11">
    <location>
        <begin position="425"/>
        <end position="429"/>
    </location>
</feature>
<feature type="strand" evidence="11">
    <location>
        <begin position="430"/>
        <end position="438"/>
    </location>
</feature>
<feature type="helix" evidence="11">
    <location>
        <begin position="443"/>
        <end position="445"/>
    </location>
</feature>
<feature type="strand" evidence="11">
    <location>
        <begin position="452"/>
        <end position="458"/>
    </location>
</feature>
<feature type="turn" evidence="11">
    <location>
        <begin position="461"/>
        <end position="463"/>
    </location>
</feature>
<feature type="strand" evidence="11">
    <location>
        <begin position="467"/>
        <end position="472"/>
    </location>
</feature>
<feature type="helix" evidence="11">
    <location>
        <begin position="478"/>
        <end position="480"/>
    </location>
</feature>
<feature type="strand" evidence="11">
    <location>
        <begin position="484"/>
        <end position="487"/>
    </location>
</feature>
<feature type="strand" evidence="11">
    <location>
        <begin position="489"/>
        <end position="499"/>
    </location>
</feature>
<feature type="helix" evidence="11">
    <location>
        <begin position="500"/>
        <end position="506"/>
    </location>
</feature>
<feature type="strand" evidence="11">
    <location>
        <begin position="513"/>
        <end position="521"/>
    </location>
</feature>
<proteinExistence type="evidence at protein level"/>
<sequence length="542" mass="61806">MACNDVDKSSFDDVCCDSGHSSCAAAMEKERESFLSPTENPSTISVSSSMPPDQQGYDVEFDPPLESKYECPICLMGLRSAVQTPCGHRFCDSCIRKSIRDTGQKCPVDNEVLLEEQLFPDNFAKREILSLTVKCSNFGCSEKMELRQLEKHLSQCRFATAPCPQCQESVPISHLDEHKSQHCLQRIMTCPDCAGSFVYAVKQNHEQFCPFANTVCEYCEMELIRDQLALHCDTDCLKAPVACTFSTFGCREKMTRNELAQHMQEFTQMHMRYMAEFLRSQTLNNCTMPSAAAHLSSDDRGASARSPDSCQCKQELLNLRETVLELEGRLVRQDQQIRELCIHNDTQKNQVTELRRKLVSLEESTRELEAQQYQGIYVWRVENFSHHLRNQEAGQPIVLHSPPFYTGRPGYKLCLRLHLQTPSAPRCSNFISLFVHTMQGEFDSQLSWPLQGTIRLAVLDQVEGQHHIEVMETKPDLQAFQRPTVMRNPKGFGYVTFLHLQALRQRGFVKEDVLLVRCEVTPRFDASLRREGVQPRGPEPSI</sequence>
<name>TRAF6_DANRE</name>
<gene>
    <name type="primary">traf6</name>
    <name type="ORF">si:dkey-56p7.3</name>
    <name type="ORF">zgc:63704</name>
</gene>